<feature type="chain" id="PRO_0000346412" description="Methylenetetrahydrofolate--tRNA-(uracil-5-)-methyltransferase TrmFO">
    <location>
        <begin position="1"/>
        <end position="461"/>
    </location>
</feature>
<feature type="binding site" evidence="1">
    <location>
        <begin position="16"/>
        <end position="21"/>
    </location>
    <ligand>
        <name>FAD</name>
        <dbReference type="ChEBI" id="CHEBI:57692"/>
    </ligand>
</feature>
<comment type="function">
    <text evidence="1">Catalyzes the folate-dependent formation of 5-methyl-uridine at position 54 (M-5-U54) in all tRNAs.</text>
</comment>
<comment type="catalytic activity">
    <reaction evidence="1">
        <text>uridine(54) in tRNA + (6R)-5,10-methylene-5,6,7,8-tetrahydrofolate + NADH + H(+) = 5-methyluridine(54) in tRNA + (6S)-5,6,7,8-tetrahydrofolate + NAD(+)</text>
        <dbReference type="Rhea" id="RHEA:16873"/>
        <dbReference type="Rhea" id="RHEA-COMP:10167"/>
        <dbReference type="Rhea" id="RHEA-COMP:10193"/>
        <dbReference type="ChEBI" id="CHEBI:15378"/>
        <dbReference type="ChEBI" id="CHEBI:15636"/>
        <dbReference type="ChEBI" id="CHEBI:57453"/>
        <dbReference type="ChEBI" id="CHEBI:57540"/>
        <dbReference type="ChEBI" id="CHEBI:57945"/>
        <dbReference type="ChEBI" id="CHEBI:65315"/>
        <dbReference type="ChEBI" id="CHEBI:74447"/>
        <dbReference type="EC" id="2.1.1.74"/>
    </reaction>
</comment>
<comment type="catalytic activity">
    <reaction evidence="1">
        <text>uridine(54) in tRNA + (6R)-5,10-methylene-5,6,7,8-tetrahydrofolate + NADPH + H(+) = 5-methyluridine(54) in tRNA + (6S)-5,6,7,8-tetrahydrofolate + NADP(+)</text>
        <dbReference type="Rhea" id="RHEA:62372"/>
        <dbReference type="Rhea" id="RHEA-COMP:10167"/>
        <dbReference type="Rhea" id="RHEA-COMP:10193"/>
        <dbReference type="ChEBI" id="CHEBI:15378"/>
        <dbReference type="ChEBI" id="CHEBI:15636"/>
        <dbReference type="ChEBI" id="CHEBI:57453"/>
        <dbReference type="ChEBI" id="CHEBI:57783"/>
        <dbReference type="ChEBI" id="CHEBI:58349"/>
        <dbReference type="ChEBI" id="CHEBI:65315"/>
        <dbReference type="ChEBI" id="CHEBI:74447"/>
        <dbReference type="EC" id="2.1.1.74"/>
    </reaction>
</comment>
<comment type="cofactor">
    <cofactor evidence="1">
        <name>FAD</name>
        <dbReference type="ChEBI" id="CHEBI:57692"/>
    </cofactor>
</comment>
<comment type="subcellular location">
    <subcellularLocation>
        <location evidence="1">Cytoplasm</location>
    </subcellularLocation>
</comment>
<comment type="similarity">
    <text evidence="1">Belongs to the MnmG family. TrmFO subfamily.</text>
</comment>
<accession>Q7U7T2</accession>
<dbReference type="EC" id="2.1.1.74" evidence="1"/>
<dbReference type="EMBL" id="BX569691">
    <property type="protein sequence ID" value="CAE07414.1"/>
    <property type="molecule type" value="Genomic_DNA"/>
</dbReference>
<dbReference type="RefSeq" id="WP_011127764.1">
    <property type="nucleotide sequence ID" value="NC_005070.1"/>
</dbReference>
<dbReference type="SMR" id="Q7U7T2"/>
<dbReference type="STRING" id="84588.SYNW0899"/>
<dbReference type="KEGG" id="syw:SYNW0899"/>
<dbReference type="eggNOG" id="COG1206">
    <property type="taxonomic scope" value="Bacteria"/>
</dbReference>
<dbReference type="HOGENOM" id="CLU_033057_1_0_3"/>
<dbReference type="Proteomes" id="UP000001422">
    <property type="component" value="Chromosome"/>
</dbReference>
<dbReference type="GO" id="GO:0005829">
    <property type="term" value="C:cytosol"/>
    <property type="evidence" value="ECO:0007669"/>
    <property type="project" value="TreeGrafter"/>
</dbReference>
<dbReference type="GO" id="GO:0050660">
    <property type="term" value="F:flavin adenine dinucleotide binding"/>
    <property type="evidence" value="ECO:0007669"/>
    <property type="project" value="UniProtKB-UniRule"/>
</dbReference>
<dbReference type="GO" id="GO:0047151">
    <property type="term" value="F:tRNA (uracil(54)-C5)-methyltransferase activity, 5,10-methylenetetrahydrofolate-dependent"/>
    <property type="evidence" value="ECO:0007669"/>
    <property type="project" value="UniProtKB-UniRule"/>
</dbReference>
<dbReference type="GO" id="GO:0030488">
    <property type="term" value="P:tRNA methylation"/>
    <property type="evidence" value="ECO:0007669"/>
    <property type="project" value="TreeGrafter"/>
</dbReference>
<dbReference type="GO" id="GO:0002098">
    <property type="term" value="P:tRNA wobble uridine modification"/>
    <property type="evidence" value="ECO:0007669"/>
    <property type="project" value="TreeGrafter"/>
</dbReference>
<dbReference type="Gene3D" id="3.50.50.60">
    <property type="entry name" value="FAD/NAD(P)-binding domain"/>
    <property type="match status" value="2"/>
</dbReference>
<dbReference type="HAMAP" id="MF_01037">
    <property type="entry name" value="TrmFO"/>
    <property type="match status" value="1"/>
</dbReference>
<dbReference type="InterPro" id="IPR036188">
    <property type="entry name" value="FAD/NAD-bd_sf"/>
</dbReference>
<dbReference type="InterPro" id="IPR002218">
    <property type="entry name" value="MnmG-rel"/>
</dbReference>
<dbReference type="InterPro" id="IPR040131">
    <property type="entry name" value="MnmG_N"/>
</dbReference>
<dbReference type="InterPro" id="IPR004417">
    <property type="entry name" value="TrmFO"/>
</dbReference>
<dbReference type="NCBIfam" id="TIGR00137">
    <property type="entry name" value="gid_trmFO"/>
    <property type="match status" value="1"/>
</dbReference>
<dbReference type="NCBIfam" id="NF003739">
    <property type="entry name" value="PRK05335.1"/>
    <property type="match status" value="1"/>
</dbReference>
<dbReference type="PANTHER" id="PTHR11806">
    <property type="entry name" value="GLUCOSE INHIBITED DIVISION PROTEIN A"/>
    <property type="match status" value="1"/>
</dbReference>
<dbReference type="PANTHER" id="PTHR11806:SF2">
    <property type="entry name" value="METHYLENETETRAHYDROFOLATE--TRNA-(URACIL-5-)-METHYLTRANSFERASE TRMFO"/>
    <property type="match status" value="1"/>
</dbReference>
<dbReference type="Pfam" id="PF01134">
    <property type="entry name" value="GIDA"/>
    <property type="match status" value="1"/>
</dbReference>
<dbReference type="SUPFAM" id="SSF51905">
    <property type="entry name" value="FAD/NAD(P)-binding domain"/>
    <property type="match status" value="1"/>
</dbReference>
<sequence length="461" mass="50688">MLQLLLSVERPVTVLGAGLAGTEAAWQVARAGIPVTIVEMRPMRRSPAHHSSDFAELVCSNSFGALSSDRAAGLLQEEMRRLGSLVIETADAHAVPAGGALAVDRGRYSAALTEALDQHPLVTIERREQQALPGDDQITVLATGPLTSEPLAEDLRAFTGRSDCHFFDAASPIVHGDSIDLNVAFRASRYDKGDADYINCPMDKEQYLAFREALLTAEQAELKDFDKNDATFFEGCLPIEELARRGEDTMRYGPLKPIGLWDPRWGDVNDRDVRRAKRAYAVVQLRQEDKDGRLWNLVGFQTNLKWGEQKRVLQMIPGLAEAEFVRFGVMHRNTFLESPQLLEPTLQFRSRSSLLAAGQITGTEGYAAAVAGGWLAGTNAARLARGLAPIDLPATCMSGALTHFVSEAPTAKFQPMPPNFGLLPELPERIRDKRARYGAYRDRALRDLERIKALTPNALVA</sequence>
<keyword id="KW-0963">Cytoplasm</keyword>
<keyword id="KW-0274">FAD</keyword>
<keyword id="KW-0285">Flavoprotein</keyword>
<keyword id="KW-0489">Methyltransferase</keyword>
<keyword id="KW-0520">NAD</keyword>
<keyword id="KW-0521">NADP</keyword>
<keyword id="KW-0808">Transferase</keyword>
<keyword id="KW-0819">tRNA processing</keyword>
<proteinExistence type="inferred from homology"/>
<reference key="1">
    <citation type="journal article" date="2003" name="Nature">
        <title>The genome of a motile marine Synechococcus.</title>
        <authorList>
            <person name="Palenik B."/>
            <person name="Brahamsha B."/>
            <person name="Larimer F.W."/>
            <person name="Land M.L."/>
            <person name="Hauser L."/>
            <person name="Chain P."/>
            <person name="Lamerdin J.E."/>
            <person name="Regala W."/>
            <person name="Allen E.E."/>
            <person name="McCarren J."/>
            <person name="Paulsen I.T."/>
            <person name="Dufresne A."/>
            <person name="Partensky F."/>
            <person name="Webb E.A."/>
            <person name="Waterbury J."/>
        </authorList>
    </citation>
    <scope>NUCLEOTIDE SEQUENCE [LARGE SCALE GENOMIC DNA]</scope>
    <source>
        <strain>WH8102</strain>
    </source>
</reference>
<protein>
    <recommendedName>
        <fullName evidence="1">Methylenetetrahydrofolate--tRNA-(uracil-5-)-methyltransferase TrmFO</fullName>
        <ecNumber evidence="1">2.1.1.74</ecNumber>
    </recommendedName>
    <alternativeName>
        <fullName evidence="1">Folate-dependent tRNA (uracil-5-)-methyltransferase</fullName>
    </alternativeName>
    <alternativeName>
        <fullName evidence="1">Folate-dependent tRNA(M-5-U54)-methyltransferase</fullName>
    </alternativeName>
</protein>
<gene>
    <name evidence="1" type="primary">trmFO</name>
    <name type="ordered locus">SYNW0899</name>
</gene>
<organism>
    <name type="scientific">Parasynechococcus marenigrum (strain WH8102)</name>
    <dbReference type="NCBI Taxonomy" id="84588"/>
    <lineage>
        <taxon>Bacteria</taxon>
        <taxon>Bacillati</taxon>
        <taxon>Cyanobacteriota</taxon>
        <taxon>Cyanophyceae</taxon>
        <taxon>Synechococcales</taxon>
        <taxon>Prochlorococcaceae</taxon>
        <taxon>Parasynechococcus</taxon>
        <taxon>Parasynechococcus marenigrum</taxon>
    </lineage>
</organism>
<evidence type="ECO:0000255" key="1">
    <source>
        <dbReference type="HAMAP-Rule" id="MF_01037"/>
    </source>
</evidence>
<name>TRMFO_PARMW</name>